<dbReference type="EC" id="2.7.8.13" evidence="1"/>
<dbReference type="EMBL" id="CP000438">
    <property type="protein sequence ID" value="ABJ13685.1"/>
    <property type="molecule type" value="Genomic_DNA"/>
</dbReference>
<dbReference type="RefSeq" id="WP_003094129.1">
    <property type="nucleotide sequence ID" value="NZ_CP034244.1"/>
</dbReference>
<dbReference type="SMR" id="Q02H25"/>
<dbReference type="KEGG" id="pau:PA14_57380"/>
<dbReference type="PseudoCAP" id="PA14_57380"/>
<dbReference type="HOGENOM" id="CLU_023982_0_0_6"/>
<dbReference type="BioCyc" id="PAER208963:G1G74-4832-MONOMER"/>
<dbReference type="UniPathway" id="UPA00219"/>
<dbReference type="Proteomes" id="UP000000653">
    <property type="component" value="Chromosome"/>
</dbReference>
<dbReference type="GO" id="GO:0005886">
    <property type="term" value="C:plasma membrane"/>
    <property type="evidence" value="ECO:0007669"/>
    <property type="project" value="UniProtKB-SubCell"/>
</dbReference>
<dbReference type="GO" id="GO:0046872">
    <property type="term" value="F:metal ion binding"/>
    <property type="evidence" value="ECO:0007669"/>
    <property type="project" value="UniProtKB-KW"/>
</dbReference>
<dbReference type="GO" id="GO:0008963">
    <property type="term" value="F:phospho-N-acetylmuramoyl-pentapeptide-transferase activity"/>
    <property type="evidence" value="ECO:0007669"/>
    <property type="project" value="UniProtKB-UniRule"/>
</dbReference>
<dbReference type="GO" id="GO:0051992">
    <property type="term" value="F:UDP-N-acetylmuramoyl-L-alanyl-D-glutamyl-meso-2,6-diaminopimelyl-D-alanyl-D-alanine:undecaprenyl-phosphate transferase activity"/>
    <property type="evidence" value="ECO:0007669"/>
    <property type="project" value="RHEA"/>
</dbReference>
<dbReference type="GO" id="GO:0051301">
    <property type="term" value="P:cell division"/>
    <property type="evidence" value="ECO:0007669"/>
    <property type="project" value="UniProtKB-KW"/>
</dbReference>
<dbReference type="GO" id="GO:0071555">
    <property type="term" value="P:cell wall organization"/>
    <property type="evidence" value="ECO:0007669"/>
    <property type="project" value="UniProtKB-KW"/>
</dbReference>
<dbReference type="GO" id="GO:0009252">
    <property type="term" value="P:peptidoglycan biosynthetic process"/>
    <property type="evidence" value="ECO:0007669"/>
    <property type="project" value="UniProtKB-UniRule"/>
</dbReference>
<dbReference type="GO" id="GO:0008360">
    <property type="term" value="P:regulation of cell shape"/>
    <property type="evidence" value="ECO:0007669"/>
    <property type="project" value="UniProtKB-KW"/>
</dbReference>
<dbReference type="CDD" id="cd06852">
    <property type="entry name" value="GT_MraY"/>
    <property type="match status" value="1"/>
</dbReference>
<dbReference type="HAMAP" id="MF_00038">
    <property type="entry name" value="MraY"/>
    <property type="match status" value="1"/>
</dbReference>
<dbReference type="InterPro" id="IPR000715">
    <property type="entry name" value="Glycosyl_transferase_4"/>
</dbReference>
<dbReference type="InterPro" id="IPR003524">
    <property type="entry name" value="PNAcMuramoyl-5peptid_Trfase"/>
</dbReference>
<dbReference type="InterPro" id="IPR018480">
    <property type="entry name" value="PNAcMuramoyl-5peptid_Trfase_CS"/>
</dbReference>
<dbReference type="NCBIfam" id="TIGR00445">
    <property type="entry name" value="mraY"/>
    <property type="match status" value="1"/>
</dbReference>
<dbReference type="PANTHER" id="PTHR22926">
    <property type="entry name" value="PHOSPHO-N-ACETYLMURAMOYL-PENTAPEPTIDE-TRANSFERASE"/>
    <property type="match status" value="1"/>
</dbReference>
<dbReference type="PANTHER" id="PTHR22926:SF5">
    <property type="entry name" value="PHOSPHO-N-ACETYLMURAMOYL-PENTAPEPTIDE-TRANSFERASE HOMOLOG"/>
    <property type="match status" value="1"/>
</dbReference>
<dbReference type="Pfam" id="PF00953">
    <property type="entry name" value="Glycos_transf_4"/>
    <property type="match status" value="1"/>
</dbReference>
<dbReference type="PROSITE" id="PS01347">
    <property type="entry name" value="MRAY_1"/>
    <property type="match status" value="1"/>
</dbReference>
<dbReference type="PROSITE" id="PS01348">
    <property type="entry name" value="MRAY_2"/>
    <property type="match status" value="1"/>
</dbReference>
<feature type="chain" id="PRO_1000003030" description="Phospho-N-acetylmuramoyl-pentapeptide-transferase">
    <location>
        <begin position="1"/>
        <end position="360"/>
    </location>
</feature>
<feature type="transmembrane region" description="Helical" evidence="1">
    <location>
        <begin position="25"/>
        <end position="45"/>
    </location>
</feature>
<feature type="transmembrane region" description="Helical" evidence="1">
    <location>
        <begin position="73"/>
        <end position="93"/>
    </location>
</feature>
<feature type="transmembrane region" description="Helical" evidence="1">
    <location>
        <begin position="97"/>
        <end position="117"/>
    </location>
</feature>
<feature type="transmembrane region" description="Helical" evidence="1">
    <location>
        <begin position="142"/>
        <end position="162"/>
    </location>
</feature>
<feature type="transmembrane region" description="Helical" evidence="1">
    <location>
        <begin position="167"/>
        <end position="187"/>
    </location>
</feature>
<feature type="transmembrane region" description="Helical" evidence="1">
    <location>
        <begin position="199"/>
        <end position="219"/>
    </location>
</feature>
<feature type="transmembrane region" description="Helical" evidence="1">
    <location>
        <begin position="236"/>
        <end position="256"/>
    </location>
</feature>
<feature type="transmembrane region" description="Helical" evidence="1">
    <location>
        <begin position="263"/>
        <end position="283"/>
    </location>
</feature>
<feature type="transmembrane region" description="Helical" evidence="1">
    <location>
        <begin position="288"/>
        <end position="308"/>
    </location>
</feature>
<feature type="transmembrane region" description="Helical" evidence="1">
    <location>
        <begin position="338"/>
        <end position="358"/>
    </location>
</feature>
<gene>
    <name evidence="1" type="primary">mraY</name>
    <name type="ordered locus">PA14_57380</name>
</gene>
<evidence type="ECO:0000255" key="1">
    <source>
        <dbReference type="HAMAP-Rule" id="MF_00038"/>
    </source>
</evidence>
<reference key="1">
    <citation type="journal article" date="2006" name="Genome Biol.">
        <title>Genomic analysis reveals that Pseudomonas aeruginosa virulence is combinatorial.</title>
        <authorList>
            <person name="Lee D.G."/>
            <person name="Urbach J.M."/>
            <person name="Wu G."/>
            <person name="Liberati N.T."/>
            <person name="Feinbaum R.L."/>
            <person name="Miyata S."/>
            <person name="Diggins L.T."/>
            <person name="He J."/>
            <person name="Saucier M."/>
            <person name="Deziel E."/>
            <person name="Friedman L."/>
            <person name="Li L."/>
            <person name="Grills G."/>
            <person name="Montgomery K."/>
            <person name="Kucherlapati R."/>
            <person name="Rahme L.G."/>
            <person name="Ausubel F.M."/>
        </authorList>
    </citation>
    <scope>NUCLEOTIDE SEQUENCE [LARGE SCALE GENOMIC DNA]</scope>
    <source>
        <strain>UCBPP-PA14</strain>
    </source>
</reference>
<proteinExistence type="inferred from homology"/>
<sequence length="360" mass="39653">MLLLLAEYLQQFYKGFGVFQYLTLRGILSVLTALSLSLWLGPWMIRTLQIRQIGQAVRNDGPQSHLSKKGTPTMGGALILTAIAISTLLWADLSNRYVWVVLVVTLLFGAIGWVDDYRKVIEKNSRGLPSRWKYFWQSVFGIGAAVFLYMTAETPIETTLIVPMLKSVEIQLGIFFVVLTYFVIVGSSNAVNLTDGLDGLAIMPTVMVAGALGIFCYLSGNVKFAEYLLIPNVPGAGELIVFCAALVGAGLGFLWFNTYPAQVFMGDVGALALGAALGTIAVIVRQEIVLFIMGGVFVMETLSVMIQVASFKLTGRRVFRMAPIHHHFELKGWPEPRVIVRFWIITVILVLIGLATLKLR</sequence>
<organism>
    <name type="scientific">Pseudomonas aeruginosa (strain UCBPP-PA14)</name>
    <dbReference type="NCBI Taxonomy" id="208963"/>
    <lineage>
        <taxon>Bacteria</taxon>
        <taxon>Pseudomonadati</taxon>
        <taxon>Pseudomonadota</taxon>
        <taxon>Gammaproteobacteria</taxon>
        <taxon>Pseudomonadales</taxon>
        <taxon>Pseudomonadaceae</taxon>
        <taxon>Pseudomonas</taxon>
    </lineage>
</organism>
<protein>
    <recommendedName>
        <fullName evidence="1">Phospho-N-acetylmuramoyl-pentapeptide-transferase</fullName>
        <ecNumber evidence="1">2.7.8.13</ecNumber>
    </recommendedName>
    <alternativeName>
        <fullName evidence="1">UDP-MurNAc-pentapeptide phosphotransferase</fullName>
    </alternativeName>
</protein>
<name>MRAY_PSEAB</name>
<comment type="function">
    <text evidence="1">Catalyzes the initial step of the lipid cycle reactions in the biosynthesis of the cell wall peptidoglycan: transfers peptidoglycan precursor phospho-MurNAc-pentapeptide from UDP-MurNAc-pentapeptide onto the lipid carrier undecaprenyl phosphate, yielding undecaprenyl-pyrophosphoryl-MurNAc-pentapeptide, known as lipid I.</text>
</comment>
<comment type="catalytic activity">
    <reaction evidence="1">
        <text>UDP-N-acetyl-alpha-D-muramoyl-L-alanyl-gamma-D-glutamyl-meso-2,6-diaminopimeloyl-D-alanyl-D-alanine + di-trans,octa-cis-undecaprenyl phosphate = di-trans,octa-cis-undecaprenyl diphospho-N-acetyl-alpha-D-muramoyl-L-alanyl-D-glutamyl-meso-2,6-diaminopimeloyl-D-alanyl-D-alanine + UMP</text>
        <dbReference type="Rhea" id="RHEA:28386"/>
        <dbReference type="ChEBI" id="CHEBI:57865"/>
        <dbReference type="ChEBI" id="CHEBI:60392"/>
        <dbReference type="ChEBI" id="CHEBI:61386"/>
        <dbReference type="ChEBI" id="CHEBI:61387"/>
        <dbReference type="EC" id="2.7.8.13"/>
    </reaction>
</comment>
<comment type="cofactor">
    <cofactor evidence="1">
        <name>Mg(2+)</name>
        <dbReference type="ChEBI" id="CHEBI:18420"/>
    </cofactor>
</comment>
<comment type="pathway">
    <text evidence="1">Cell wall biogenesis; peptidoglycan biosynthesis.</text>
</comment>
<comment type="subcellular location">
    <subcellularLocation>
        <location evidence="1">Cell inner membrane</location>
        <topology evidence="1">Multi-pass membrane protein</topology>
    </subcellularLocation>
</comment>
<comment type="similarity">
    <text evidence="1">Belongs to the glycosyltransferase 4 family. MraY subfamily.</text>
</comment>
<accession>Q02H25</accession>
<keyword id="KW-0131">Cell cycle</keyword>
<keyword id="KW-0132">Cell division</keyword>
<keyword id="KW-0997">Cell inner membrane</keyword>
<keyword id="KW-1003">Cell membrane</keyword>
<keyword id="KW-0133">Cell shape</keyword>
<keyword id="KW-0961">Cell wall biogenesis/degradation</keyword>
<keyword id="KW-0460">Magnesium</keyword>
<keyword id="KW-0472">Membrane</keyword>
<keyword id="KW-0479">Metal-binding</keyword>
<keyword id="KW-0573">Peptidoglycan synthesis</keyword>
<keyword id="KW-0808">Transferase</keyword>
<keyword id="KW-0812">Transmembrane</keyword>
<keyword id="KW-1133">Transmembrane helix</keyword>